<feature type="chain" id="PRO_0000097737" description="Leucine-rich repeat protein SHOC-2">
    <location>
        <begin position="1"/>
        <end position="582"/>
    </location>
</feature>
<feature type="repeat" description="LRR 1" evidence="9 10 11 12 16 17 18 19 20 21 22 23">
    <location>
        <begin position="101"/>
        <end position="122"/>
    </location>
</feature>
<feature type="repeat" description="LRR 2" evidence="9 10 11 12 16 17 18 19 20 21 22 23">
    <location>
        <begin position="124"/>
        <end position="145"/>
    </location>
</feature>
<feature type="repeat" description="LRR 3" evidence="9 10 11 12 16 17 18 19 20 21 22 23">
    <location>
        <begin position="147"/>
        <end position="169"/>
    </location>
</feature>
<feature type="repeat" description="LRR 4" evidence="9 10 11 12 16 17 18 19 20 21 22 23">
    <location>
        <begin position="170"/>
        <end position="191"/>
    </location>
</feature>
<feature type="repeat" description="LRR 5" evidence="9 10 11 12 16 17 18 19 20 21 22 23">
    <location>
        <begin position="193"/>
        <end position="214"/>
    </location>
</feature>
<feature type="repeat" description="LRR 6" evidence="9 10 11 12 16 17 18 19 20 21 22 23">
    <location>
        <begin position="216"/>
        <end position="237"/>
    </location>
</feature>
<feature type="repeat" description="LRR 7" evidence="9 10 11 12 16 17 18 19 20 21 22 23">
    <location>
        <begin position="239"/>
        <end position="260"/>
    </location>
</feature>
<feature type="repeat" description="LRR 8" evidence="9 10 11 12 16 17 18 19 20 21 22 23">
    <location>
        <begin position="262"/>
        <end position="283"/>
    </location>
</feature>
<feature type="repeat" description="LRR 9" evidence="9 10 11 12 16 17 18 19 20 21 22 23">
    <location>
        <begin position="285"/>
        <end position="307"/>
    </location>
</feature>
<feature type="repeat" description="LRR 10" evidence="9 10 11 12 16 17 18 19 20 21 22 23">
    <location>
        <begin position="308"/>
        <end position="329"/>
    </location>
</feature>
<feature type="repeat" description="LRR 11" evidence="9 10 11 12 16 17 18 19 20 21 22 23">
    <location>
        <begin position="332"/>
        <end position="353"/>
    </location>
</feature>
<feature type="repeat" description="LRR 12" evidence="9 10 11 12 16 17 18 19 20 21 22 23">
    <location>
        <begin position="356"/>
        <end position="377"/>
    </location>
</feature>
<feature type="repeat" description="LRR 13" evidence="9 10 11 12 16 17 18 19 20 21 22 23">
    <location>
        <begin position="380"/>
        <end position="400"/>
    </location>
</feature>
<feature type="repeat" description="LRR 14" evidence="9 10 11 12 16 17 18 19 20 21 22 23">
    <location>
        <begin position="403"/>
        <end position="424"/>
    </location>
</feature>
<feature type="repeat" description="LRR 15" evidence="9 10 11 12 16 17 18 19 20 21 22 23">
    <location>
        <begin position="426"/>
        <end position="448"/>
    </location>
</feature>
<feature type="repeat" description="LRR 16" evidence="9 10 11 12 16 17 18 19 20 21 22 23">
    <location>
        <begin position="449"/>
        <end position="470"/>
    </location>
</feature>
<feature type="repeat" description="LRR 17" evidence="9 10 11 12 16 17 18 19 20 21 22 23">
    <location>
        <begin position="472"/>
        <end position="494"/>
    </location>
</feature>
<feature type="repeat" description="LRR 18" evidence="9 10 11 12 16 17 18 19 20 21 22 23">
    <location>
        <begin position="495"/>
        <end position="516"/>
    </location>
</feature>
<feature type="repeat" description="LRR 19" evidence="9 10 11 12 16 17 18 19 20 21 22 23">
    <location>
        <begin position="518"/>
        <end position="540"/>
    </location>
</feature>
<feature type="repeat" description="LRR 20" evidence="9 10 11 12 16 17 18 19 20 21 22 23">
    <location>
        <begin position="542"/>
        <end position="563"/>
    </location>
</feature>
<feature type="region of interest" description="Disordered" evidence="1">
    <location>
        <begin position="1"/>
        <end position="88"/>
    </location>
</feature>
<feature type="short sequence motif" description="RVxF motif; important for interaction with PP1c" evidence="9 10 11 12">
    <location>
        <begin position="63"/>
        <end position="66"/>
    </location>
</feature>
<feature type="compositionally biased region" description="Basic and acidic residues" evidence="1">
    <location>
        <begin position="1"/>
        <end position="29"/>
    </location>
</feature>
<feature type="compositionally biased region" description="Basic and acidic residues" evidence="1">
    <location>
        <begin position="36"/>
        <end position="57"/>
    </location>
</feature>
<feature type="splice variant" id="VSP_038188" description="In isoform 2." evidence="14">
    <location>
        <begin position="234"/>
        <end position="279"/>
    </location>
</feature>
<feature type="sequence variant" id="VAR_060199" description="In NSLH1; creates a N-myristoylation site, resulting in myristoylation of the protein and aberrant targeting to the plasma membrane; dbSNP:rs267607048." evidence="5 6">
    <original>S</original>
    <variation>G</variation>
    <location>
        <position position="2"/>
    </location>
</feature>
<feature type="sequence variant" id="VAR_074030" description="In NSLH1; significantly decreases ERK1/2 activity; does not affect cytoplasm and nucleus localization; does not affect SHOC2-MRAS-RAF1 complex assembly; impairs interaction with phosphatase 1c; promotes SMP complex formation; promotes dephosphorylation of 'S-365' of BRAF by SMP complex; dbSNP:rs730881020." evidence="7 9 10 11 12">
    <original>M</original>
    <variation>I</variation>
    <location>
        <position position="173"/>
    </location>
</feature>
<feature type="mutagenesis site" description="Impairs SMP complex formation." evidence="11 12">
    <original>V</original>
    <variation>A</variation>
    <variation>G</variation>
    <location>
        <position position="64"/>
    </location>
</feature>
<feature type="mutagenesis site" description="Impairs SMP complex formation." evidence="11 12">
    <original>F</original>
    <variation>A</variation>
    <variation>V</variation>
    <location>
        <position position="66"/>
    </location>
</feature>
<feature type="mutagenesis site" description="Impairs SMP complex formation." evidence="9">
    <original>K</original>
    <variation>E</variation>
    <location>
        <position position="109"/>
    </location>
</feature>
<feature type="mutagenesis site" description="Abolishes SMP complex formation; when associated with A-131." evidence="12">
    <original>Y</original>
    <variation>A</variation>
    <location>
        <position position="129"/>
    </location>
</feature>
<feature type="mutagenesis site" description="Abolishes SMP complex formation; when associated with A-129." evidence="12">
    <original>Y</original>
    <variation>A</variation>
    <location>
        <position position="131"/>
    </location>
</feature>
<feature type="mutagenesis site" description="Impairs SMP complex formation." evidence="11">
    <original>Y</original>
    <variation>E</variation>
    <location>
        <position position="131"/>
    </location>
</feature>
<feature type="mutagenesis site" description="Impairs SMP complex formation; when associated with E-180 and E-226." evidence="9">
    <original>K</original>
    <variation>E</variation>
    <location>
        <position position="134"/>
    </location>
</feature>
<feature type="mutagenesis site" description="Impairs SMP complex formation." evidence="12">
    <original>E</original>
    <variation>A</variation>
    <location>
        <position position="155"/>
    </location>
</feature>
<feature type="mutagenesis site" description="Abolishes SMP complex formation." evidence="9 12">
    <original>D</original>
    <variation>N</variation>
    <location>
        <position position="175"/>
    </location>
</feature>
<feature type="mutagenesis site" description="Abolishes SMP complex formation." evidence="12">
    <original>R</original>
    <variation>A</variation>
    <location>
        <position position="177"/>
    </location>
</feature>
<feature type="mutagenesis site" description="Impairs SMP complex formation; when associated with E-134 and E-226." evidence="9">
    <original>K</original>
    <variation>E</variation>
    <location>
        <position position="180"/>
    </location>
</feature>
<feature type="mutagenesis site" description="Impairs SMP complex formation." evidence="11 12">
    <original>R</original>
    <variation>A</variation>
    <variation>F</variation>
    <location>
        <position position="223"/>
    </location>
</feature>
<feature type="mutagenesis site" description="Impairs SMP complex formation; when associated with E-134 and E-180." evidence="9">
    <original>K</original>
    <variation>E</variation>
    <location>
        <position position="226"/>
    </location>
</feature>
<feature type="mutagenesis site" description="Promotes SMP complex formation; when associated with Y-270." evidence="9">
    <original>Q</original>
    <variation>H</variation>
    <location>
        <position position="269"/>
    </location>
</feature>
<feature type="mutagenesis site" description="Promotes SMP complex formation; when associated with H-269." evidence="9">
    <original>H</original>
    <variation>Y</variation>
    <location>
        <position position="270"/>
    </location>
</feature>
<feature type="mutagenesis site" description="Impairs SMP complex formation. Impairs SMP complex formation; when associated with K-503." evidence="9 11">
    <original>E</original>
    <variation>K</variation>
    <location>
        <position position="457"/>
    </location>
</feature>
<feature type="mutagenesis site" description="Impairs SMP complex formation; when associated with K-457." evidence="9">
    <original>E</original>
    <variation>K</variation>
    <location>
        <position position="503"/>
    </location>
</feature>
<feature type="sequence conflict" description="In Ref. 4; BAF85522." evidence="15" ref="4">
    <original>K</original>
    <variation>E</variation>
    <location>
        <position position="475"/>
    </location>
</feature>
<feature type="sequence conflict" description="In Ref. 3; BAA74885." evidence="15" ref="3">
    <original>F</original>
    <variation>L</variation>
    <location>
        <position position="535"/>
    </location>
</feature>
<feature type="strand" evidence="26">
    <location>
        <begin position="65"/>
        <end position="68"/>
    </location>
</feature>
<feature type="strand" evidence="26">
    <location>
        <begin position="71"/>
        <end position="73"/>
    </location>
</feature>
<feature type="helix" evidence="25">
    <location>
        <begin position="89"/>
        <end position="100"/>
    </location>
</feature>
<feature type="strand" evidence="25">
    <location>
        <begin position="103"/>
        <end position="106"/>
    </location>
</feature>
<feature type="helix" evidence="25">
    <location>
        <begin position="117"/>
        <end position="121"/>
    </location>
</feature>
<feature type="strand" evidence="25">
    <location>
        <begin position="126"/>
        <end position="129"/>
    </location>
</feature>
<feature type="helix" evidence="25">
    <location>
        <begin position="140"/>
        <end position="144"/>
    </location>
</feature>
<feature type="strand" evidence="25">
    <location>
        <begin position="150"/>
        <end position="152"/>
    </location>
</feature>
<feature type="helix" evidence="25">
    <location>
        <begin position="163"/>
        <end position="167"/>
    </location>
</feature>
<feature type="strand" evidence="25">
    <location>
        <begin position="173"/>
        <end position="175"/>
    </location>
</feature>
<feature type="helix" evidence="25">
    <location>
        <begin position="186"/>
        <end position="190"/>
    </location>
</feature>
<feature type="strand" evidence="25">
    <location>
        <begin position="195"/>
        <end position="198"/>
    </location>
</feature>
<feature type="helix" evidence="25">
    <location>
        <begin position="209"/>
        <end position="213"/>
    </location>
</feature>
<feature type="strand" evidence="25">
    <location>
        <begin position="218"/>
        <end position="221"/>
    </location>
</feature>
<feature type="helix" evidence="25">
    <location>
        <begin position="232"/>
        <end position="236"/>
    </location>
</feature>
<feature type="strand" evidence="25">
    <location>
        <begin position="241"/>
        <end position="244"/>
    </location>
</feature>
<feature type="helix" evidence="25">
    <location>
        <begin position="255"/>
        <end position="259"/>
    </location>
</feature>
<feature type="strand" evidence="25">
    <location>
        <begin position="264"/>
        <end position="267"/>
    </location>
</feature>
<feature type="helix" evidence="25">
    <location>
        <begin position="278"/>
        <end position="282"/>
    </location>
</feature>
<feature type="strand" evidence="25">
    <location>
        <begin position="288"/>
        <end position="290"/>
    </location>
</feature>
<feature type="strand" evidence="28">
    <location>
        <begin position="292"/>
        <end position="294"/>
    </location>
</feature>
<feature type="helix" evidence="25">
    <location>
        <begin position="301"/>
        <end position="305"/>
    </location>
</feature>
<feature type="strand" evidence="25">
    <location>
        <begin position="311"/>
        <end position="313"/>
    </location>
</feature>
<feature type="helix" evidence="25">
    <location>
        <begin position="326"/>
        <end position="329"/>
    </location>
</feature>
<feature type="strand" evidence="25">
    <location>
        <begin position="335"/>
        <end position="337"/>
    </location>
</feature>
<feature type="turn" evidence="25">
    <location>
        <begin position="351"/>
        <end position="354"/>
    </location>
</feature>
<feature type="strand" evidence="25">
    <location>
        <begin position="358"/>
        <end position="361"/>
    </location>
</feature>
<feature type="turn" evidence="25">
    <location>
        <begin position="372"/>
        <end position="377"/>
    </location>
</feature>
<feature type="strand" evidence="25">
    <location>
        <begin position="383"/>
        <end position="385"/>
    </location>
</feature>
<feature type="helix" evidence="25">
    <location>
        <begin position="398"/>
        <end position="400"/>
    </location>
</feature>
<feature type="strand" evidence="25">
    <location>
        <begin position="406"/>
        <end position="408"/>
    </location>
</feature>
<feature type="helix" evidence="25">
    <location>
        <begin position="419"/>
        <end position="423"/>
    </location>
</feature>
<feature type="strand" evidence="25">
    <location>
        <begin position="429"/>
        <end position="431"/>
    </location>
</feature>
<feature type="helix" evidence="25">
    <location>
        <begin position="442"/>
        <end position="446"/>
    </location>
</feature>
<feature type="strand" evidence="25">
    <location>
        <begin position="452"/>
        <end position="454"/>
    </location>
</feature>
<feature type="helix" evidence="25">
    <location>
        <begin position="465"/>
        <end position="469"/>
    </location>
</feature>
<feature type="strand" evidence="25">
    <location>
        <begin position="475"/>
        <end position="477"/>
    </location>
</feature>
<feature type="helix" evidence="25">
    <location>
        <begin position="488"/>
        <end position="492"/>
    </location>
</feature>
<feature type="strand" evidence="25">
    <location>
        <begin position="498"/>
        <end position="500"/>
    </location>
</feature>
<feature type="helix" evidence="25">
    <location>
        <begin position="511"/>
        <end position="515"/>
    </location>
</feature>
<feature type="strand" evidence="25">
    <location>
        <begin position="521"/>
        <end position="523"/>
    </location>
</feature>
<feature type="helix" evidence="25">
    <location>
        <begin position="535"/>
        <end position="539"/>
    </location>
</feature>
<feature type="strand" evidence="25">
    <location>
        <begin position="545"/>
        <end position="547"/>
    </location>
</feature>
<feature type="strand" evidence="24">
    <location>
        <begin position="554"/>
        <end position="556"/>
    </location>
</feature>
<feature type="helix" evidence="25">
    <location>
        <begin position="558"/>
        <end position="563"/>
    </location>
</feature>
<feature type="helix" evidence="25">
    <location>
        <begin position="565"/>
        <end position="575"/>
    </location>
</feature>
<feature type="turn" evidence="27">
    <location>
        <begin position="577"/>
        <end position="580"/>
    </location>
</feature>
<proteinExistence type="evidence at protein level"/>
<gene>
    <name type="primary">SHOC2</name>
    <name type="synonym">KIAA0862</name>
</gene>
<sequence>MSSSLGKEKDSKEKDPKVPSAKEREKEAKASGGFGKESKEKEPKTKGKDAKDGKKDSSAAQPGVAFSVDNTIKRPNPAPGTRKKSSNAEVIKELNKCREENSMRLDLSKRSIHILPSSIKELTQLTELYLYSNKLQSLPAEVGCLVNLMTLALSENSLTSLPDSLDNLKKLRMLDLRHNKLREIPSVVYRLDSLTTLYLRFNRITTVEKDIKNLSKLSMLSIRENKIKQLPAEIGELCNLITLDVAHNQLEHLPKEIGNCTQITNLDLQHNELLDLPDTIGNLSSLSRLGLRYNRLSAIPRSLAKCSALEELNLENNNISTLPESLLSSLVKLNSLTLARNCFQLYPVGGPSQFSTIYSLNMEHNRINKIPFGIFSRAKVLSKLNMKDNQLTSLPLDFGTWTSMVELNLATNQLTKIPEDVSGLVSLEVLILSNNLLKKLPHGLGNLRKLRELDLEENKLESLPNEIAYLKDLQKLVLTNNQLTTLPRGIGHLTNLTHLGLGENLLTHLPEEIGTLENLEELYLNDNPNLHSLPFELALCSKLSIMSIENCPLSHLPPQIVAGGPSFIIQFLKMQGPYRAMV</sequence>
<name>SHOC2_HUMAN</name>
<comment type="function">
    <text evidence="2 4 7 9 10 11 12">Core component of the SHOC2-MRAS-PP1c (SMP) holophosphatase complex that regulates activation of the MAPK pathway (PubMed:10783161, PubMed:16630891, PubMed:25137548, PubMed:35768504, PubMed:35830882, PubMed:35831509, PubMed:36175670). Acts as a scaffolding protein in the SMP complex (PubMed:35768504, PubMed:35830882, PubMed:35831509, PubMed:36175670). The SMP complex specifically dephosphorylates the inhibitory phosphorylation at 'Ser-259' of RAF1 kinase, 'Ser-365' of BRAF kinase and 'Ser-214' of ARAF kinase, stimulating their kinase activities (PubMed:10783161, PubMed:16630891, PubMed:35768504, PubMed:35830882, PubMed:35831509, PubMed:36175670). The SMP complex enhances the dephosphorylation activity and substrate specificity of PP1c (PubMed:35768504, PubMed:36175670).</text>
</comment>
<comment type="subunit">
    <text evidence="3 4 7 8 9 10 11 12 13">Component of the SHOC2-MRAS-PP1c (SMP) complex consisting of SHOC2, GTP-bound M-Ras/MRAS and the catalytic subunit of protein phosphatase 1 (either PPP1CA, PPP1CB or PPP1CC) (PubMed:16630891, PubMed:25137548, PubMed:35768504, PubMed:35830882, PubMed:35831509, PubMed:36175670). SHOC2 and PP1c preferably bind M-Ras/MRAS, but they also bind K-Ras/KRAS, N-Ras/NRAS and H-Ras/HRAS; these interactions are GTP-dependent and both SHOC2 and PP1c are required to form a stable complex (PubMed:35768504, PubMed:35830882, PubMed:35831509, PubMed:36175670, PubMed:9674433). Interacts with PP1c in the absence of Ras GTPases (PubMed:35768504, PubMed:35831509). Interacts with M-Ras/MRAS and RAF1 (PubMed:16630891, PubMed:25137548). Interacts with ERBIN; disrupts the interaction with RAF1 and Ras, preventing the activation of the Ras signaling pathway (PubMed:16301319). Interacts with LZTR1 (PubMed:30368668).</text>
</comment>
<comment type="subcellular location">
    <subcellularLocation>
        <location evidence="5 7">Cytoplasm</location>
    </subcellularLocation>
    <subcellularLocation>
        <location evidence="5 7">Nucleus</location>
    </subcellularLocation>
    <text evidence="5">Translocates from cytoplasm to nucleus upon growth factor stimulation.</text>
</comment>
<comment type="alternative products">
    <event type="alternative splicing"/>
    <isoform>
        <id>Q9UQ13-1</id>
        <name>1</name>
        <sequence type="displayed"/>
    </isoform>
    <isoform>
        <id>Q9UQ13-2</id>
        <name>2</name>
        <sequence type="described" ref="VSP_038188"/>
    </isoform>
</comment>
<comment type="domain">
    <text evidence="9 11 12">Contains a N-terminal RVxF motif that is important for interaction with PP1c.</text>
</comment>
<comment type="domain">
    <text evidence="9 10 11 12">PP1c (all isoforms) binds to the concave side of SHOC2, via LRR 2-5, 8-11, and 13-18 (PubMed:35768504, PubMed:35830882, PubMed:35831509, PubMed:36175670). M-Ras/MRAS binds to the concave side of SHOC2, via LRR 1-10, 12 and 14-16 (PubMed:35768504, PubMed:35830882, PubMed:35831509, PubMed:36175670).</text>
</comment>
<comment type="disease" evidence="5 6 7">
    <disease id="DI-02076">
        <name>Noonan syndrome-like disorder with loose anagen hair 1</name>
        <acronym>NSLH1</acronym>
        <description>A syndrome characterized by Noonan dysmorphic features such as macrocephaly, high forehead, hypertelorism, palpebral ptosis, low-set and posteriorly rotated ears, short and webbed neck, pectus anomalies, in association with pluckable, sparse, thin and slow-growing hair.</description>
        <dbReference type="MIM" id="607721"/>
    </disease>
    <text>The disease is caused by variants affecting the gene represented in this entry.</text>
</comment>
<comment type="similarity">
    <text evidence="15">Belongs to the SHOC2 family.</text>
</comment>
<comment type="sequence caution" evidence="15">
    <conflict type="erroneous initiation">
        <sequence resource="EMBL-CDS" id="BAA74885"/>
    </conflict>
    <text>Extended N-terminus.</text>
</comment>
<comment type="sequence caution" evidence="15">
    <conflict type="erroneous initiation">
        <sequence resource="EMBL-CDS" id="BAG52235"/>
    </conflict>
    <text>Truncated N-terminus.</text>
</comment>
<comment type="online information" name="Protein Spotlight">
    <link uri="https://www.proteinspotlight.org/back_issues/121"/>
    <text>The matchmaker - Issue 121 of September 2010</text>
</comment>
<keyword id="KW-0002">3D-structure</keyword>
<keyword id="KW-0025">Alternative splicing</keyword>
<keyword id="KW-0963">Cytoplasm</keyword>
<keyword id="KW-0225">Disease variant</keyword>
<keyword id="KW-0433">Leucine-rich repeat</keyword>
<keyword id="KW-0539">Nucleus</keyword>
<keyword id="KW-1267">Proteomics identification</keyword>
<keyword id="KW-1185">Reference proteome</keyword>
<keyword id="KW-0677">Repeat</keyword>
<accession>Q9UQ13</accession>
<accession>A8K9W8</accession>
<accession>B3KR23</accession>
<accession>O76063</accession>
<accession>Q5VZS8</accession>
<accession>Q5VZS9</accession>
<organism>
    <name type="scientific">Homo sapiens</name>
    <name type="common">Human</name>
    <dbReference type="NCBI Taxonomy" id="9606"/>
    <lineage>
        <taxon>Eukaryota</taxon>
        <taxon>Metazoa</taxon>
        <taxon>Chordata</taxon>
        <taxon>Craniata</taxon>
        <taxon>Vertebrata</taxon>
        <taxon>Euteleostomi</taxon>
        <taxon>Mammalia</taxon>
        <taxon>Eutheria</taxon>
        <taxon>Euarchontoglires</taxon>
        <taxon>Primates</taxon>
        <taxon>Haplorrhini</taxon>
        <taxon>Catarrhini</taxon>
        <taxon>Hominidae</taxon>
        <taxon>Homo</taxon>
    </lineage>
</organism>
<evidence type="ECO:0000256" key="1">
    <source>
        <dbReference type="SAM" id="MobiDB-lite"/>
    </source>
</evidence>
<evidence type="ECO:0000269" key="2">
    <source>
    </source>
</evidence>
<evidence type="ECO:0000269" key="3">
    <source>
    </source>
</evidence>
<evidence type="ECO:0000269" key="4">
    <source>
    </source>
</evidence>
<evidence type="ECO:0000269" key="5">
    <source>
    </source>
</evidence>
<evidence type="ECO:0000269" key="6">
    <source>
    </source>
</evidence>
<evidence type="ECO:0000269" key="7">
    <source>
    </source>
</evidence>
<evidence type="ECO:0000269" key="8">
    <source>
    </source>
</evidence>
<evidence type="ECO:0000269" key="9">
    <source>
    </source>
</evidence>
<evidence type="ECO:0000269" key="10">
    <source>
    </source>
</evidence>
<evidence type="ECO:0000269" key="11">
    <source>
    </source>
</evidence>
<evidence type="ECO:0000269" key="12">
    <source>
    </source>
</evidence>
<evidence type="ECO:0000269" key="13">
    <source>
    </source>
</evidence>
<evidence type="ECO:0000303" key="14">
    <source>
    </source>
</evidence>
<evidence type="ECO:0000305" key="15"/>
<evidence type="ECO:0007744" key="16">
    <source>
        <dbReference type="PDB" id="7SD0"/>
    </source>
</evidence>
<evidence type="ECO:0007744" key="17">
    <source>
        <dbReference type="PDB" id="7SD1"/>
    </source>
</evidence>
<evidence type="ECO:0007744" key="18">
    <source>
        <dbReference type="PDB" id="7T7A"/>
    </source>
</evidence>
<evidence type="ECO:0007744" key="19">
    <source>
        <dbReference type="PDB" id="7TVF"/>
    </source>
</evidence>
<evidence type="ECO:0007744" key="20">
    <source>
        <dbReference type="PDB" id="7TVG"/>
    </source>
</evidence>
<evidence type="ECO:0007744" key="21">
    <source>
        <dbReference type="PDB" id="7TXH"/>
    </source>
</evidence>
<evidence type="ECO:0007744" key="22">
    <source>
        <dbReference type="PDB" id="7TYG"/>
    </source>
</evidence>
<evidence type="ECO:0007744" key="23">
    <source>
        <dbReference type="PDB" id="7UPI"/>
    </source>
</evidence>
<evidence type="ECO:0007829" key="24">
    <source>
        <dbReference type="PDB" id="7SD0"/>
    </source>
</evidence>
<evidence type="ECO:0007829" key="25">
    <source>
        <dbReference type="PDB" id="7T7A"/>
    </source>
</evidence>
<evidence type="ECO:0007829" key="26">
    <source>
        <dbReference type="PDB" id="7TVF"/>
    </source>
</evidence>
<evidence type="ECO:0007829" key="27">
    <source>
        <dbReference type="PDB" id="7TXH"/>
    </source>
</evidence>
<evidence type="ECO:0007829" key="28">
    <source>
        <dbReference type="PDB" id="7TYG"/>
    </source>
</evidence>
<dbReference type="EMBL" id="AF068920">
    <property type="protein sequence ID" value="AAC39856.1"/>
    <property type="molecule type" value="mRNA"/>
</dbReference>
<dbReference type="EMBL" id="AF054828">
    <property type="protein sequence ID" value="AAC25698.1"/>
    <property type="molecule type" value="mRNA"/>
</dbReference>
<dbReference type="EMBL" id="AB020669">
    <property type="protein sequence ID" value="BAA74885.2"/>
    <property type="status" value="ALT_INIT"/>
    <property type="molecule type" value="mRNA"/>
</dbReference>
<dbReference type="EMBL" id="AK090820">
    <property type="protein sequence ID" value="BAG52235.1"/>
    <property type="status" value="ALT_INIT"/>
    <property type="molecule type" value="mRNA"/>
</dbReference>
<dbReference type="EMBL" id="AK292833">
    <property type="protein sequence ID" value="BAF85522.1"/>
    <property type="molecule type" value="mRNA"/>
</dbReference>
<dbReference type="EMBL" id="AL158163">
    <property type="status" value="NOT_ANNOTATED_CDS"/>
    <property type="molecule type" value="Genomic_DNA"/>
</dbReference>
<dbReference type="EMBL" id="CH471066">
    <property type="protein sequence ID" value="EAW49548.1"/>
    <property type="molecule type" value="Genomic_DNA"/>
</dbReference>
<dbReference type="EMBL" id="BC050445">
    <property type="protein sequence ID" value="AAH50445.1"/>
    <property type="molecule type" value="mRNA"/>
</dbReference>
<dbReference type="CCDS" id="CCDS58095.1">
    <molecule id="Q9UQ13-2"/>
</dbReference>
<dbReference type="CCDS" id="CCDS7568.1">
    <molecule id="Q9UQ13-1"/>
</dbReference>
<dbReference type="RefSeq" id="NP_001255968.1">
    <molecule id="Q9UQ13-2"/>
    <property type="nucleotide sequence ID" value="NM_001269039.3"/>
</dbReference>
<dbReference type="RefSeq" id="NP_001311265.1">
    <molecule id="Q9UQ13-1"/>
    <property type="nucleotide sequence ID" value="NM_001324336.2"/>
</dbReference>
<dbReference type="RefSeq" id="NP_001311266.1">
    <molecule id="Q9UQ13-1"/>
    <property type="nucleotide sequence ID" value="NM_001324337.2"/>
</dbReference>
<dbReference type="RefSeq" id="NP_031399.2">
    <molecule id="Q9UQ13-1"/>
    <property type="nucleotide sequence ID" value="NM_007373.3"/>
</dbReference>
<dbReference type="RefSeq" id="XP_016872191.1">
    <property type="nucleotide sequence ID" value="XM_017016702.1"/>
</dbReference>
<dbReference type="RefSeq" id="XP_016872192.1">
    <property type="nucleotide sequence ID" value="XM_017016703.1"/>
</dbReference>
<dbReference type="RefSeq" id="XP_016872193.1">
    <property type="nucleotide sequence ID" value="XM_017016704.1"/>
</dbReference>
<dbReference type="RefSeq" id="XP_047281752.1">
    <molecule id="Q9UQ13-2"/>
    <property type="nucleotide sequence ID" value="XM_047425796.1"/>
</dbReference>
<dbReference type="RefSeq" id="XP_054222808.1">
    <molecule id="Q9UQ13-1"/>
    <property type="nucleotide sequence ID" value="XM_054366833.1"/>
</dbReference>
<dbReference type="RefSeq" id="XP_054222809.1">
    <molecule id="Q9UQ13-1"/>
    <property type="nucleotide sequence ID" value="XM_054366834.1"/>
</dbReference>
<dbReference type="RefSeq" id="XP_054222810.1">
    <molecule id="Q9UQ13-2"/>
    <property type="nucleotide sequence ID" value="XM_054366835.1"/>
</dbReference>
<dbReference type="PDB" id="7SD0">
    <property type="method" value="EM"/>
    <property type="resolution" value="2.95 A"/>
    <property type="chains" value="A=2-582"/>
</dbReference>
<dbReference type="PDB" id="7SD1">
    <property type="method" value="X-ray"/>
    <property type="resolution" value="3.19 A"/>
    <property type="chains" value="A/B/C/D=2-582"/>
</dbReference>
<dbReference type="PDB" id="7T7A">
    <property type="method" value="X-ray"/>
    <property type="resolution" value="1.79 A"/>
    <property type="chains" value="A/B=88-581"/>
</dbReference>
<dbReference type="PDB" id="7TVF">
    <property type="method" value="X-ray"/>
    <property type="resolution" value="2.17 A"/>
    <property type="chains" value="A/D=2-582"/>
</dbReference>
<dbReference type="PDB" id="7TVG">
    <property type="method" value="X-ray"/>
    <property type="resolution" value="2.40 A"/>
    <property type="chains" value="D=59-564"/>
</dbReference>
<dbReference type="PDB" id="7TXH">
    <property type="method" value="X-ray"/>
    <property type="resolution" value="1.95 A"/>
    <property type="chains" value="B/E=80-582"/>
</dbReference>
<dbReference type="PDB" id="7TYG">
    <property type="method" value="X-ray"/>
    <property type="resolution" value="1.90 A"/>
    <property type="chains" value="A/B=80-582"/>
</dbReference>
<dbReference type="PDB" id="7UPI">
    <property type="method" value="EM"/>
    <property type="resolution" value="2.89 A"/>
    <property type="chains" value="C=1-582"/>
</dbReference>
<dbReference type="PDBsum" id="7SD0"/>
<dbReference type="PDBsum" id="7SD1"/>
<dbReference type="PDBsum" id="7T7A"/>
<dbReference type="PDBsum" id="7TVF"/>
<dbReference type="PDBsum" id="7TVG"/>
<dbReference type="PDBsum" id="7TXH"/>
<dbReference type="PDBsum" id="7TYG"/>
<dbReference type="PDBsum" id="7UPI"/>
<dbReference type="EMDB" id="EMD-25044"/>
<dbReference type="EMDB" id="EMD-26667"/>
<dbReference type="SASBDB" id="Q9UQ13"/>
<dbReference type="SMR" id="Q9UQ13"/>
<dbReference type="BioGRID" id="113729">
    <property type="interactions" value="74"/>
</dbReference>
<dbReference type="ComplexPortal" id="CPX-25716">
    <property type="entry name" value="SHOC2-MRAS-PPP1CA complex"/>
</dbReference>
<dbReference type="ComplexPortal" id="CPX-25719">
    <property type="entry name" value="SHOC2-MRAS-PPP1CB complex"/>
</dbReference>
<dbReference type="ComplexPortal" id="CPX-25720">
    <property type="entry name" value="SHOC2-MRAS-PPP1CC complex"/>
</dbReference>
<dbReference type="CORUM" id="Q9UQ13"/>
<dbReference type="FunCoup" id="Q9UQ13">
    <property type="interactions" value="5141"/>
</dbReference>
<dbReference type="IntAct" id="Q9UQ13">
    <property type="interactions" value="45"/>
</dbReference>
<dbReference type="MINT" id="Q9UQ13"/>
<dbReference type="STRING" id="9606.ENSP00000358464"/>
<dbReference type="GlyGen" id="Q9UQ13">
    <property type="glycosylation" value="2 sites, 1 N-linked glycan (1 site), 1 O-linked glycan (1 site)"/>
</dbReference>
<dbReference type="iPTMnet" id="Q9UQ13"/>
<dbReference type="PhosphoSitePlus" id="Q9UQ13"/>
<dbReference type="BioMuta" id="SHOC2"/>
<dbReference type="DMDM" id="14423936"/>
<dbReference type="CPTAC" id="CPTAC-1562"/>
<dbReference type="jPOST" id="Q9UQ13"/>
<dbReference type="MassIVE" id="Q9UQ13"/>
<dbReference type="PaxDb" id="9606-ENSP00000358464"/>
<dbReference type="PeptideAtlas" id="Q9UQ13"/>
<dbReference type="ProteomicsDB" id="85490">
    <molecule id="Q9UQ13-1"/>
</dbReference>
<dbReference type="ProteomicsDB" id="85491">
    <molecule id="Q9UQ13-2"/>
</dbReference>
<dbReference type="Pumba" id="Q9UQ13"/>
<dbReference type="Antibodypedia" id="1953">
    <property type="antibodies" value="248 antibodies from 33 providers"/>
</dbReference>
<dbReference type="DNASU" id="8036"/>
<dbReference type="Ensembl" id="ENST00000265277.10">
    <molecule id="Q9UQ13-2"/>
    <property type="protein sequence ID" value="ENSP00000265277.5"/>
    <property type="gene ID" value="ENSG00000108061.13"/>
</dbReference>
<dbReference type="Ensembl" id="ENST00000369452.9">
    <molecule id="Q9UQ13-1"/>
    <property type="protein sequence ID" value="ENSP00000358464.5"/>
    <property type="gene ID" value="ENSG00000108061.13"/>
</dbReference>
<dbReference type="Ensembl" id="ENST00000685059.1">
    <molecule id="Q9UQ13-1"/>
    <property type="protein sequence ID" value="ENSP00000510210.1"/>
    <property type="gene ID" value="ENSG00000108061.13"/>
</dbReference>
<dbReference type="Ensembl" id="ENST00000688928.1">
    <molecule id="Q9UQ13-1"/>
    <property type="protein sequence ID" value="ENSP00000509273.1"/>
    <property type="gene ID" value="ENSG00000108061.13"/>
</dbReference>
<dbReference type="Ensembl" id="ENST00000689118.1">
    <molecule id="Q9UQ13-1"/>
    <property type="protein sequence ID" value="ENSP00000510554.1"/>
    <property type="gene ID" value="ENSG00000108061.13"/>
</dbReference>
<dbReference type="Ensembl" id="ENST00000689300.1">
    <molecule id="Q9UQ13-1"/>
    <property type="protein sequence ID" value="ENSP00000510639.1"/>
    <property type="gene ID" value="ENSG00000108061.13"/>
</dbReference>
<dbReference type="Ensembl" id="ENST00000691369.1">
    <molecule id="Q9UQ13-1"/>
    <property type="protein sequence ID" value="ENSP00000509754.1"/>
    <property type="gene ID" value="ENSG00000108061.13"/>
</dbReference>
<dbReference type="Ensembl" id="ENST00000691441.1">
    <molecule id="Q9UQ13-1"/>
    <property type="protein sequence ID" value="ENSP00000509686.1"/>
    <property type="gene ID" value="ENSG00000108061.13"/>
</dbReference>
<dbReference type="GeneID" id="8036"/>
<dbReference type="KEGG" id="hsa:8036"/>
<dbReference type="MANE-Select" id="ENST00000369452.9">
    <property type="protein sequence ID" value="ENSP00000358464.5"/>
    <property type="RefSeq nucleotide sequence ID" value="NM_007373.4"/>
    <property type="RefSeq protein sequence ID" value="NP_031399.2"/>
</dbReference>
<dbReference type="UCSC" id="uc001kzl.5">
    <molecule id="Q9UQ13-1"/>
    <property type="organism name" value="human"/>
</dbReference>
<dbReference type="AGR" id="HGNC:15454"/>
<dbReference type="CTD" id="8036"/>
<dbReference type="DisGeNET" id="8036"/>
<dbReference type="GeneCards" id="SHOC2"/>
<dbReference type="HGNC" id="HGNC:15454">
    <property type="gene designation" value="SHOC2"/>
</dbReference>
<dbReference type="HPA" id="ENSG00000108061">
    <property type="expression patterns" value="Low tissue specificity"/>
</dbReference>
<dbReference type="MalaCards" id="SHOC2"/>
<dbReference type="MIM" id="602775">
    <property type="type" value="gene"/>
</dbReference>
<dbReference type="MIM" id="607721">
    <property type="type" value="phenotype"/>
</dbReference>
<dbReference type="neXtProt" id="NX_Q9UQ13"/>
<dbReference type="OpenTargets" id="ENSG00000108061"/>
<dbReference type="Orphanet" id="2701">
    <property type="disease" value="Noonan syndrome-like disorder with loose anagen hair"/>
</dbReference>
<dbReference type="PharmGKB" id="PA37960"/>
<dbReference type="VEuPathDB" id="HostDB:ENSG00000108061"/>
<dbReference type="eggNOG" id="KOG0619">
    <property type="taxonomic scope" value="Eukaryota"/>
</dbReference>
<dbReference type="GeneTree" id="ENSGT00940000156270"/>
<dbReference type="HOGENOM" id="CLU_000288_18_23_1"/>
<dbReference type="InParanoid" id="Q9UQ13"/>
<dbReference type="OMA" id="NQFTSYP"/>
<dbReference type="OrthoDB" id="676979at2759"/>
<dbReference type="PAN-GO" id="Q9UQ13">
    <property type="GO annotations" value="3 GO annotations based on evolutionary models"/>
</dbReference>
<dbReference type="PhylomeDB" id="Q9UQ13"/>
<dbReference type="TreeFam" id="TF315742"/>
<dbReference type="PathwayCommons" id="Q9UQ13"/>
<dbReference type="Reactome" id="R-HSA-5673000">
    <property type="pathway name" value="RAF activation"/>
</dbReference>
<dbReference type="Reactome" id="R-HSA-9726840">
    <property type="pathway name" value="SHOC2 M1731 mutant abolishes MRAS complex function"/>
</dbReference>
<dbReference type="Reactome" id="R-HSA-9726842">
    <property type="pathway name" value="Gain-of-function MRAS complexes activate RAF signaling"/>
</dbReference>
<dbReference type="SignaLink" id="Q9UQ13"/>
<dbReference type="SIGNOR" id="Q9UQ13"/>
<dbReference type="BioGRID-ORCS" id="8036">
    <property type="hits" value="185 hits in 1173 CRISPR screens"/>
</dbReference>
<dbReference type="ChiTaRS" id="SHOC2">
    <property type="organism name" value="human"/>
</dbReference>
<dbReference type="GeneWiki" id="SHOC2"/>
<dbReference type="GenomeRNAi" id="8036"/>
<dbReference type="Pharos" id="Q9UQ13">
    <property type="development level" value="Tbio"/>
</dbReference>
<dbReference type="PRO" id="PR:Q9UQ13"/>
<dbReference type="Proteomes" id="UP000005640">
    <property type="component" value="Chromosome 10"/>
</dbReference>
<dbReference type="RNAct" id="Q9UQ13">
    <property type="molecule type" value="protein"/>
</dbReference>
<dbReference type="Bgee" id="ENSG00000108061">
    <property type="expression patterns" value="Expressed in calcaneal tendon and 211 other cell types or tissues"/>
</dbReference>
<dbReference type="ExpressionAtlas" id="Q9UQ13">
    <property type="expression patterns" value="baseline and differential"/>
</dbReference>
<dbReference type="GO" id="GO:0005737">
    <property type="term" value="C:cytoplasm"/>
    <property type="evidence" value="ECO:0000314"/>
    <property type="project" value="UniProtKB"/>
</dbReference>
<dbReference type="GO" id="GO:0005829">
    <property type="term" value="C:cytosol"/>
    <property type="evidence" value="ECO:0000314"/>
    <property type="project" value="HPA"/>
</dbReference>
<dbReference type="GO" id="GO:0005654">
    <property type="term" value="C:nucleoplasm"/>
    <property type="evidence" value="ECO:0000314"/>
    <property type="project" value="HPA"/>
</dbReference>
<dbReference type="GO" id="GO:0005634">
    <property type="term" value="C:nucleus"/>
    <property type="evidence" value="ECO:0000314"/>
    <property type="project" value="UniProtKB"/>
</dbReference>
<dbReference type="GO" id="GO:0000164">
    <property type="term" value="C:protein phosphatase type 1 complex"/>
    <property type="evidence" value="ECO:0000314"/>
    <property type="project" value="UniProtKB"/>
</dbReference>
<dbReference type="GO" id="GO:0008157">
    <property type="term" value="F:protein phosphatase 1 binding"/>
    <property type="evidence" value="ECO:0000314"/>
    <property type="project" value="UniProtKB"/>
</dbReference>
<dbReference type="GO" id="GO:0019903">
    <property type="term" value="F:protein phosphatase binding"/>
    <property type="evidence" value="ECO:0000314"/>
    <property type="project" value="UniProtKB"/>
</dbReference>
<dbReference type="GO" id="GO:0019888">
    <property type="term" value="F:protein phosphatase regulator activity"/>
    <property type="evidence" value="ECO:0000304"/>
    <property type="project" value="UniProtKB"/>
</dbReference>
<dbReference type="GO" id="GO:0005225">
    <property type="term" value="F:volume-sensitive anion channel activity"/>
    <property type="evidence" value="ECO:0000318"/>
    <property type="project" value="GO_Central"/>
</dbReference>
<dbReference type="GO" id="GO:0071378">
    <property type="term" value="P:cellular response to growth hormone stimulus"/>
    <property type="evidence" value="ECO:0007669"/>
    <property type="project" value="Ensembl"/>
</dbReference>
<dbReference type="GO" id="GO:0140361">
    <property type="term" value="P:cyclic-GMP-AMP transmembrane import across plasma membrane"/>
    <property type="evidence" value="ECO:0000318"/>
    <property type="project" value="GO_Central"/>
</dbReference>
<dbReference type="GO" id="GO:0008543">
    <property type="term" value="P:fibroblast growth factor receptor signaling pathway"/>
    <property type="evidence" value="ECO:0000303"/>
    <property type="project" value="UniProtKB"/>
</dbReference>
<dbReference type="GO" id="GO:0035556">
    <property type="term" value="P:intracellular signal transduction"/>
    <property type="evidence" value="ECO:0000318"/>
    <property type="project" value="GO_Central"/>
</dbReference>
<dbReference type="GO" id="GO:2000178">
    <property type="term" value="P:negative regulation of neural precursor cell proliferation"/>
    <property type="evidence" value="ECO:0007669"/>
    <property type="project" value="Ensembl"/>
</dbReference>
<dbReference type="GO" id="GO:0045665">
    <property type="term" value="P:negative regulation of neuron differentiation"/>
    <property type="evidence" value="ECO:0007669"/>
    <property type="project" value="Ensembl"/>
</dbReference>
<dbReference type="GO" id="GO:0038180">
    <property type="term" value="P:nerve growth factor signaling pathway"/>
    <property type="evidence" value="ECO:0007669"/>
    <property type="project" value="Ensembl"/>
</dbReference>
<dbReference type="GO" id="GO:0045666">
    <property type="term" value="P:positive regulation of neuron differentiation"/>
    <property type="evidence" value="ECO:0007669"/>
    <property type="project" value="Ensembl"/>
</dbReference>
<dbReference type="GO" id="GO:0010976">
    <property type="term" value="P:positive regulation of neuron projection development"/>
    <property type="evidence" value="ECO:0007669"/>
    <property type="project" value="Ensembl"/>
</dbReference>
<dbReference type="GO" id="GO:0046579">
    <property type="term" value="P:positive regulation of Ras protein signal transduction"/>
    <property type="evidence" value="ECO:0000315"/>
    <property type="project" value="UniProtKB"/>
</dbReference>
<dbReference type="GO" id="GO:0043408">
    <property type="term" value="P:regulation of MAPK cascade"/>
    <property type="evidence" value="ECO:0000314"/>
    <property type="project" value="UniProtKB"/>
</dbReference>
<dbReference type="FunFam" id="3.80.10.10:FF:000115">
    <property type="entry name" value="leucine-rich repeat protein SHOC-2"/>
    <property type="match status" value="1"/>
</dbReference>
<dbReference type="FunFam" id="3.80.10.10:FF:000327">
    <property type="entry name" value="leucine-rich repeat protein SHOC-2 isoform X2"/>
    <property type="match status" value="1"/>
</dbReference>
<dbReference type="FunFam" id="3.80.10.10:FF:000407">
    <property type="entry name" value="leucine-rich repeat protein SHOC-2 isoform X2"/>
    <property type="match status" value="1"/>
</dbReference>
<dbReference type="Gene3D" id="3.80.10.10">
    <property type="entry name" value="Ribonuclease Inhibitor"/>
    <property type="match status" value="4"/>
</dbReference>
<dbReference type="InterPro" id="IPR001611">
    <property type="entry name" value="Leu-rich_rpt"/>
</dbReference>
<dbReference type="InterPro" id="IPR003591">
    <property type="entry name" value="Leu-rich_rpt_typical-subtyp"/>
</dbReference>
<dbReference type="InterPro" id="IPR032675">
    <property type="entry name" value="LRR_dom_sf"/>
</dbReference>
<dbReference type="InterPro" id="IPR050216">
    <property type="entry name" value="LRR_domain-containing"/>
</dbReference>
<dbReference type="InterPro" id="IPR055414">
    <property type="entry name" value="LRR_R13L4/SHOC2-like"/>
</dbReference>
<dbReference type="PANTHER" id="PTHR48051">
    <property type="match status" value="1"/>
</dbReference>
<dbReference type="PANTHER" id="PTHR48051:SF54">
    <property type="entry name" value="LEUCINE-RICH REPEAT-CONTAINING PROTEIN"/>
    <property type="match status" value="1"/>
</dbReference>
<dbReference type="Pfam" id="PF23598">
    <property type="entry name" value="LRR_14"/>
    <property type="match status" value="2"/>
</dbReference>
<dbReference type="Pfam" id="PF13855">
    <property type="entry name" value="LRR_8"/>
    <property type="match status" value="1"/>
</dbReference>
<dbReference type="SMART" id="SM00364">
    <property type="entry name" value="LRR_BAC"/>
    <property type="match status" value="12"/>
</dbReference>
<dbReference type="SMART" id="SM00365">
    <property type="entry name" value="LRR_SD22"/>
    <property type="match status" value="6"/>
</dbReference>
<dbReference type="SMART" id="SM00369">
    <property type="entry name" value="LRR_TYP"/>
    <property type="match status" value="16"/>
</dbReference>
<dbReference type="SUPFAM" id="SSF52058">
    <property type="entry name" value="L domain-like"/>
    <property type="match status" value="2"/>
</dbReference>
<dbReference type="PROSITE" id="PS51450">
    <property type="entry name" value="LRR"/>
    <property type="match status" value="17"/>
</dbReference>
<protein>
    <recommendedName>
        <fullName>Leucine-rich repeat protein SHOC-2</fullName>
    </recommendedName>
    <alternativeName>
        <fullName>Protein soc-2 homolog</fullName>
    </alternativeName>
    <alternativeName>
        <fullName>Protein sur-8 homolog</fullName>
    </alternativeName>
</protein>
<reference key="1">
    <citation type="journal article" date="1998" name="Cell">
        <title>SUR-8, a conserved Ras-binding protein with leucine-rich repeats, positively regulates Ras-mediated signaling in C. elegans.</title>
        <authorList>
            <person name="Sieburth D.S."/>
            <person name="Sun Q."/>
            <person name="Han M."/>
        </authorList>
    </citation>
    <scope>NUCLEOTIDE SEQUENCE [MRNA] (ISOFORM 1)</scope>
    <scope>INTERACTION WITH KRAS AND NRAS</scope>
</reference>
<reference key="2">
    <citation type="journal article" date="1998" name="Proc. Natl. Acad. Sci. U.S.A.">
        <title>Soc-2 encodes a leucine-rich repeat protein implicated in fibroblast growth factor receptor signaling.</title>
        <authorList>
            <person name="Selfors L.M."/>
            <person name="Schutzman J.L."/>
            <person name="Borland C.Z."/>
            <person name="Stern M.J."/>
        </authorList>
    </citation>
    <scope>NUCLEOTIDE SEQUENCE [MRNA] (ISOFORM 1)</scope>
    <source>
        <tissue>Brain</tissue>
    </source>
</reference>
<reference key="3">
    <citation type="journal article" date="1998" name="DNA Res.">
        <title>Prediction of the coding sequences of unidentified human genes. XII. The complete sequences of 100 new cDNA clones from brain which code for large proteins in vitro.</title>
        <authorList>
            <person name="Nagase T."/>
            <person name="Ishikawa K."/>
            <person name="Suyama M."/>
            <person name="Kikuno R."/>
            <person name="Hirosawa M."/>
            <person name="Miyajima N."/>
            <person name="Tanaka A."/>
            <person name="Kotani H."/>
            <person name="Nomura N."/>
            <person name="Ohara O."/>
        </authorList>
    </citation>
    <scope>NUCLEOTIDE SEQUENCE [LARGE SCALE MRNA] (ISOFORM 1)</scope>
    <source>
        <tissue>Brain</tissue>
    </source>
</reference>
<reference key="4">
    <citation type="journal article" date="2004" name="Nat. Genet.">
        <title>Complete sequencing and characterization of 21,243 full-length human cDNAs.</title>
        <authorList>
            <person name="Ota T."/>
            <person name="Suzuki Y."/>
            <person name="Nishikawa T."/>
            <person name="Otsuki T."/>
            <person name="Sugiyama T."/>
            <person name="Irie R."/>
            <person name="Wakamatsu A."/>
            <person name="Hayashi K."/>
            <person name="Sato H."/>
            <person name="Nagai K."/>
            <person name="Kimura K."/>
            <person name="Makita H."/>
            <person name="Sekine M."/>
            <person name="Obayashi M."/>
            <person name="Nishi T."/>
            <person name="Shibahara T."/>
            <person name="Tanaka T."/>
            <person name="Ishii S."/>
            <person name="Yamamoto J."/>
            <person name="Saito K."/>
            <person name="Kawai Y."/>
            <person name="Isono Y."/>
            <person name="Nakamura Y."/>
            <person name="Nagahari K."/>
            <person name="Murakami K."/>
            <person name="Yasuda T."/>
            <person name="Iwayanagi T."/>
            <person name="Wagatsuma M."/>
            <person name="Shiratori A."/>
            <person name="Sudo H."/>
            <person name="Hosoiri T."/>
            <person name="Kaku Y."/>
            <person name="Kodaira H."/>
            <person name="Kondo H."/>
            <person name="Sugawara M."/>
            <person name="Takahashi M."/>
            <person name="Kanda K."/>
            <person name="Yokoi T."/>
            <person name="Furuya T."/>
            <person name="Kikkawa E."/>
            <person name="Omura Y."/>
            <person name="Abe K."/>
            <person name="Kamihara K."/>
            <person name="Katsuta N."/>
            <person name="Sato K."/>
            <person name="Tanikawa M."/>
            <person name="Yamazaki M."/>
            <person name="Ninomiya K."/>
            <person name="Ishibashi T."/>
            <person name="Yamashita H."/>
            <person name="Murakawa K."/>
            <person name="Fujimori K."/>
            <person name="Tanai H."/>
            <person name="Kimata M."/>
            <person name="Watanabe M."/>
            <person name="Hiraoka S."/>
            <person name="Chiba Y."/>
            <person name="Ishida S."/>
            <person name="Ono Y."/>
            <person name="Takiguchi S."/>
            <person name="Watanabe S."/>
            <person name="Yosida M."/>
            <person name="Hotuta T."/>
            <person name="Kusano J."/>
            <person name="Kanehori K."/>
            <person name="Takahashi-Fujii A."/>
            <person name="Hara H."/>
            <person name="Tanase T.-O."/>
            <person name="Nomura Y."/>
            <person name="Togiya S."/>
            <person name="Komai F."/>
            <person name="Hara R."/>
            <person name="Takeuchi K."/>
            <person name="Arita M."/>
            <person name="Imose N."/>
            <person name="Musashino K."/>
            <person name="Yuuki H."/>
            <person name="Oshima A."/>
            <person name="Sasaki N."/>
            <person name="Aotsuka S."/>
            <person name="Yoshikawa Y."/>
            <person name="Matsunawa H."/>
            <person name="Ichihara T."/>
            <person name="Shiohata N."/>
            <person name="Sano S."/>
            <person name="Moriya S."/>
            <person name="Momiyama H."/>
            <person name="Satoh N."/>
            <person name="Takami S."/>
            <person name="Terashima Y."/>
            <person name="Suzuki O."/>
            <person name="Nakagawa S."/>
            <person name="Senoh A."/>
            <person name="Mizoguchi H."/>
            <person name="Goto Y."/>
            <person name="Shimizu F."/>
            <person name="Wakebe H."/>
            <person name="Hishigaki H."/>
            <person name="Watanabe T."/>
            <person name="Sugiyama A."/>
            <person name="Takemoto M."/>
            <person name="Kawakami B."/>
            <person name="Yamazaki M."/>
            <person name="Watanabe K."/>
            <person name="Kumagai A."/>
            <person name="Itakura S."/>
            <person name="Fukuzumi Y."/>
            <person name="Fujimori Y."/>
            <person name="Komiyama M."/>
            <person name="Tashiro H."/>
            <person name="Tanigami A."/>
            <person name="Fujiwara T."/>
            <person name="Ono T."/>
            <person name="Yamada K."/>
            <person name="Fujii Y."/>
            <person name="Ozaki K."/>
            <person name="Hirao M."/>
            <person name="Ohmori Y."/>
            <person name="Kawabata A."/>
            <person name="Hikiji T."/>
            <person name="Kobatake N."/>
            <person name="Inagaki H."/>
            <person name="Ikema Y."/>
            <person name="Okamoto S."/>
            <person name="Okitani R."/>
            <person name="Kawakami T."/>
            <person name="Noguchi S."/>
            <person name="Itoh T."/>
            <person name="Shigeta K."/>
            <person name="Senba T."/>
            <person name="Matsumura K."/>
            <person name="Nakajima Y."/>
            <person name="Mizuno T."/>
            <person name="Morinaga M."/>
            <person name="Sasaki M."/>
            <person name="Togashi T."/>
            <person name="Oyama M."/>
            <person name="Hata H."/>
            <person name="Watanabe M."/>
            <person name="Komatsu T."/>
            <person name="Mizushima-Sugano J."/>
            <person name="Satoh T."/>
            <person name="Shirai Y."/>
            <person name="Takahashi Y."/>
            <person name="Nakagawa K."/>
            <person name="Okumura K."/>
            <person name="Nagase T."/>
            <person name="Nomura N."/>
            <person name="Kikuchi H."/>
            <person name="Masuho Y."/>
            <person name="Yamashita R."/>
            <person name="Nakai K."/>
            <person name="Yada T."/>
            <person name="Nakamura Y."/>
            <person name="Ohara O."/>
            <person name="Isogai T."/>
            <person name="Sugano S."/>
        </authorList>
    </citation>
    <scope>NUCLEOTIDE SEQUENCE [LARGE SCALE MRNA] (ISOFORM 1)</scope>
    <scope>NUCLEOTIDE SEQUENCE [LARGE SCALE MRNA] OF 165-582 (ISOFORM 2)</scope>
    <source>
        <tissue>Amygdala</tissue>
        <tissue>Trachea</tissue>
    </source>
</reference>
<reference key="5">
    <citation type="journal article" date="2004" name="Nature">
        <title>The DNA sequence and comparative analysis of human chromosome 10.</title>
        <authorList>
            <person name="Deloukas P."/>
            <person name="Earthrowl M.E."/>
            <person name="Grafham D.V."/>
            <person name="Rubenfield M."/>
            <person name="French L."/>
            <person name="Steward C.A."/>
            <person name="Sims S.K."/>
            <person name="Jones M.C."/>
            <person name="Searle S."/>
            <person name="Scott C."/>
            <person name="Howe K."/>
            <person name="Hunt S.E."/>
            <person name="Andrews T.D."/>
            <person name="Gilbert J.G.R."/>
            <person name="Swarbreck D."/>
            <person name="Ashurst J.L."/>
            <person name="Taylor A."/>
            <person name="Battles J."/>
            <person name="Bird C.P."/>
            <person name="Ainscough R."/>
            <person name="Almeida J.P."/>
            <person name="Ashwell R.I.S."/>
            <person name="Ambrose K.D."/>
            <person name="Babbage A.K."/>
            <person name="Bagguley C.L."/>
            <person name="Bailey J."/>
            <person name="Banerjee R."/>
            <person name="Bates K."/>
            <person name="Beasley H."/>
            <person name="Bray-Allen S."/>
            <person name="Brown A.J."/>
            <person name="Brown J.Y."/>
            <person name="Burford D.C."/>
            <person name="Burrill W."/>
            <person name="Burton J."/>
            <person name="Cahill P."/>
            <person name="Camire D."/>
            <person name="Carter N.P."/>
            <person name="Chapman J.C."/>
            <person name="Clark S.Y."/>
            <person name="Clarke G."/>
            <person name="Clee C.M."/>
            <person name="Clegg S."/>
            <person name="Corby N."/>
            <person name="Coulson A."/>
            <person name="Dhami P."/>
            <person name="Dutta I."/>
            <person name="Dunn M."/>
            <person name="Faulkner L."/>
            <person name="Frankish A."/>
            <person name="Frankland J.A."/>
            <person name="Garner P."/>
            <person name="Garnett J."/>
            <person name="Gribble S."/>
            <person name="Griffiths C."/>
            <person name="Grocock R."/>
            <person name="Gustafson E."/>
            <person name="Hammond S."/>
            <person name="Harley J.L."/>
            <person name="Hart E."/>
            <person name="Heath P.D."/>
            <person name="Ho T.P."/>
            <person name="Hopkins B."/>
            <person name="Horne J."/>
            <person name="Howden P.J."/>
            <person name="Huckle E."/>
            <person name="Hynds C."/>
            <person name="Johnson C."/>
            <person name="Johnson D."/>
            <person name="Kana A."/>
            <person name="Kay M."/>
            <person name="Kimberley A.M."/>
            <person name="Kershaw J.K."/>
            <person name="Kokkinaki M."/>
            <person name="Laird G.K."/>
            <person name="Lawlor S."/>
            <person name="Lee H.M."/>
            <person name="Leongamornlert D.A."/>
            <person name="Laird G."/>
            <person name="Lloyd C."/>
            <person name="Lloyd D.M."/>
            <person name="Loveland J."/>
            <person name="Lovell J."/>
            <person name="McLaren S."/>
            <person name="McLay K.E."/>
            <person name="McMurray A."/>
            <person name="Mashreghi-Mohammadi M."/>
            <person name="Matthews L."/>
            <person name="Milne S."/>
            <person name="Nickerson T."/>
            <person name="Nguyen M."/>
            <person name="Overton-Larty E."/>
            <person name="Palmer S.A."/>
            <person name="Pearce A.V."/>
            <person name="Peck A.I."/>
            <person name="Pelan S."/>
            <person name="Phillimore B."/>
            <person name="Porter K."/>
            <person name="Rice C.M."/>
            <person name="Rogosin A."/>
            <person name="Ross M.T."/>
            <person name="Sarafidou T."/>
            <person name="Sehra H.K."/>
            <person name="Shownkeen R."/>
            <person name="Skuce C.D."/>
            <person name="Smith M."/>
            <person name="Standring L."/>
            <person name="Sycamore N."/>
            <person name="Tester J."/>
            <person name="Thorpe A."/>
            <person name="Torcasso W."/>
            <person name="Tracey A."/>
            <person name="Tromans A."/>
            <person name="Tsolas J."/>
            <person name="Wall M."/>
            <person name="Walsh J."/>
            <person name="Wang H."/>
            <person name="Weinstock K."/>
            <person name="West A.P."/>
            <person name="Willey D.L."/>
            <person name="Whitehead S.L."/>
            <person name="Wilming L."/>
            <person name="Wray P.W."/>
            <person name="Young L."/>
            <person name="Chen Y."/>
            <person name="Lovering R.C."/>
            <person name="Moschonas N.K."/>
            <person name="Siebert R."/>
            <person name="Fechtel K."/>
            <person name="Bentley D."/>
            <person name="Durbin R.M."/>
            <person name="Hubbard T."/>
            <person name="Doucette-Stamm L."/>
            <person name="Beck S."/>
            <person name="Smith D.R."/>
            <person name="Rogers J."/>
        </authorList>
    </citation>
    <scope>NUCLEOTIDE SEQUENCE [LARGE SCALE GENOMIC DNA]</scope>
</reference>
<reference key="6">
    <citation type="submission" date="2005-09" db="EMBL/GenBank/DDBJ databases">
        <authorList>
            <person name="Mural R.J."/>
            <person name="Istrail S."/>
            <person name="Sutton G.G."/>
            <person name="Florea L."/>
            <person name="Halpern A.L."/>
            <person name="Mobarry C.M."/>
            <person name="Lippert R."/>
            <person name="Walenz B."/>
            <person name="Shatkay H."/>
            <person name="Dew I."/>
            <person name="Miller J.R."/>
            <person name="Flanigan M.J."/>
            <person name="Edwards N.J."/>
            <person name="Bolanos R."/>
            <person name="Fasulo D."/>
            <person name="Halldorsson B.V."/>
            <person name="Hannenhalli S."/>
            <person name="Turner R."/>
            <person name="Yooseph S."/>
            <person name="Lu F."/>
            <person name="Nusskern D.R."/>
            <person name="Shue B.C."/>
            <person name="Zheng X.H."/>
            <person name="Zhong F."/>
            <person name="Delcher A.L."/>
            <person name="Huson D.H."/>
            <person name="Kravitz S.A."/>
            <person name="Mouchard L."/>
            <person name="Reinert K."/>
            <person name="Remington K.A."/>
            <person name="Clark A.G."/>
            <person name="Waterman M.S."/>
            <person name="Eichler E.E."/>
            <person name="Adams M.D."/>
            <person name="Hunkapiller M.W."/>
            <person name="Myers E.W."/>
            <person name="Venter J.C."/>
        </authorList>
    </citation>
    <scope>NUCLEOTIDE SEQUENCE [LARGE SCALE GENOMIC DNA]</scope>
</reference>
<reference key="7">
    <citation type="journal article" date="2004" name="Genome Res.">
        <title>The status, quality, and expansion of the NIH full-length cDNA project: the Mammalian Gene Collection (MGC).</title>
        <authorList>
            <consortium name="The MGC Project Team"/>
        </authorList>
    </citation>
    <scope>NUCLEOTIDE SEQUENCE [LARGE SCALE MRNA] (ISOFORM 1)</scope>
    <source>
        <tissue>Testis</tissue>
    </source>
</reference>
<reference key="8">
    <citation type="journal article" date="2000" name="Genes Dev.">
        <title>The leucine-rich repeat protein SUR-8 enhances MAP kinase activation and forms a complex with Ras and Raf.</title>
        <authorList>
            <person name="Li W."/>
            <person name="Han M."/>
            <person name="Guan K.-L."/>
        </authorList>
    </citation>
    <scope>FUNCTION</scope>
</reference>
<reference key="9">
    <citation type="journal article" date="2006" name="J. Biol. Chem.">
        <title>Erbin inhibits RAF activation by disrupting the sur-8-Ras-Raf complex.</title>
        <authorList>
            <person name="Dai P."/>
            <person name="Xiong W.C."/>
            <person name="Mei L."/>
        </authorList>
    </citation>
    <scope>INTERACTION WITH ERBIN</scope>
</reference>
<reference key="10">
    <citation type="journal article" date="2006" name="Mol. Cell">
        <title>A phosphatase holoenzyme comprised of Shoc2/Sur8 and the catalytic subunit of PP1 functions as an M-Ras effector to modulate Raf activity.</title>
        <authorList>
            <person name="Rodriguez-Viciana P."/>
            <person name="Oses-Prieto J."/>
            <person name="Burlingame A."/>
            <person name="Fried M."/>
            <person name="McCormick F."/>
        </authorList>
    </citation>
    <scope>FUNCTION</scope>
    <scope>INTERACTION WITH MRAS AND RAF1</scope>
    <scope>IDENTIFICATION IN A COMPLEX WITH PP1CA; PPP1CB; PPP1CC; RAF1 AND MRAS</scope>
</reference>
<reference key="11">
    <citation type="journal article" date="2009" name="Nat. Genet.">
        <title>Mutation of SHOC2 promotes aberrant protein N-myristoylation and causes Noonan-like syndrome with loose anagen hair.</title>
        <authorList>
            <person name="Cordeddu V."/>
            <person name="Di Schiavi E."/>
            <person name="Pennacchio L.A."/>
            <person name="Ma'ayan A."/>
            <person name="Sarkozy A."/>
            <person name="Fodale V."/>
            <person name="Cecchetti S."/>
            <person name="Cardinale A."/>
            <person name="Martin J."/>
            <person name="Schackwitz W."/>
            <person name="Lipzen A."/>
            <person name="Zampino G."/>
            <person name="Mazzanti L."/>
            <person name="Digilio M.C."/>
            <person name="Martinelli S."/>
            <person name="Flex E."/>
            <person name="Lepri F."/>
            <person name="Bartholdi D."/>
            <person name="Kutsche K."/>
            <person name="Ferrero G.B."/>
            <person name="Anichini C."/>
            <person name="Selicorni A."/>
            <person name="Rossi C."/>
            <person name="Tenconi R."/>
            <person name="Zenker M."/>
            <person name="Merlo D."/>
            <person name="Dallapiccola B."/>
            <person name="Iyengar R."/>
            <person name="Bazzicalupo P."/>
            <person name="Gelb B.D."/>
            <person name="Tartaglia M."/>
        </authorList>
    </citation>
    <scope>INVOLVEMENT IN NSLH1</scope>
    <scope>VARIANT NSLH1 GLY-2</scope>
    <scope>CHARACTERIZATION OF VARIANT NSLH1 GLY-2</scope>
    <scope>SUBCELLULAR LOCATION</scope>
</reference>
<reference key="12">
    <citation type="journal article" date="2011" name="BMC Syst. Biol.">
        <title>Initial characterization of the human central proteome.</title>
        <authorList>
            <person name="Burkard T.R."/>
            <person name="Planyavsky M."/>
            <person name="Kaupe I."/>
            <person name="Breitwieser F.P."/>
            <person name="Buerckstuemmer T."/>
            <person name="Bennett K.L."/>
            <person name="Superti-Furga G."/>
            <person name="Colinge J."/>
        </authorList>
    </citation>
    <scope>IDENTIFICATION BY MASS SPECTROMETRY [LARGE SCALE ANALYSIS]</scope>
</reference>
<reference key="13">
    <citation type="journal article" date="2019" name="Hum. Genet.">
        <title>Delineation of LZTR1 mutation-positive patients with Noonan syndrome and identification of LZTR1 binding to RAF1-PPP1CB complexes.</title>
        <authorList>
            <person name="Umeki I."/>
            <person name="Niihori T."/>
            <person name="Abe T."/>
            <person name="Kanno S.I."/>
            <person name="Okamoto N."/>
            <person name="Mizuno S."/>
            <person name="Kurosawa K."/>
            <person name="Nagasaki K."/>
            <person name="Yoshida M."/>
            <person name="Ohashi H."/>
            <person name="Inoue S.I."/>
            <person name="Matsubara Y."/>
            <person name="Fujiwara I."/>
            <person name="Kure S."/>
            <person name="Aoki Y."/>
        </authorList>
    </citation>
    <scope>INTERACTION WITH LZTR1</scope>
</reference>
<reference key="14">
    <citation type="journal article" date="2013" name="Am. J. Med. Genet. A">
        <title>Expanding the SHOC2 mutation associated phenotype of Noonan syndrome with loose anagen hair: structural brain anomalies and myelofibrosis.</title>
        <authorList>
            <person name="Gripp K.W."/>
            <person name="Zand D.J."/>
            <person name="Demmer L."/>
            <person name="Anderson C.E."/>
            <person name="Dobyns W.B."/>
            <person name="Zackai E.H."/>
            <person name="Denenberg E."/>
            <person name="Jenny K."/>
            <person name="Stabley D.L."/>
            <person name="Sol-Church K."/>
        </authorList>
    </citation>
    <scope>VARIANT NSLH1 GLY-2</scope>
</reference>
<reference key="15">
    <citation type="journal article" date="2014" name="Hum. Mutat.">
        <title>A Novel SHOC2 Variant in Rasopathy.</title>
        <authorList>
            <person name="Hannig V."/>
            <person name="Jeoung M."/>
            <person name="Jang E.R."/>
            <person name="Phillips J.A. III"/>
            <person name="Galperin E."/>
        </authorList>
    </citation>
    <scope>VARIANT NSLH1 ILE-173</scope>
    <scope>CHARACTERIZATION OF VARIANT NSLH1 ILE-173</scope>
    <scope>FUNCTION</scope>
    <scope>INTERACTION WITH MRAS AND RAF1 AND PHOSPHATASE 1C</scope>
    <scope>SUBCELLULAR LOCATION</scope>
</reference>
<reference evidence="19 20" key="16">
    <citation type="journal article" date="2022" name="Nat. Struct. Mol. Biol.">
        <title>Structure of the SHOC2-MRAS-PP1c complex provides insights into RAF activation and Noonan syndrome.</title>
        <authorList>
            <person name="Bonsor D.A."/>
            <person name="Alexander P."/>
            <person name="Snead K."/>
            <person name="Hartig N."/>
            <person name="Drew M."/>
            <person name="Messing S."/>
            <person name="Finci L.I."/>
            <person name="Nissley D.V."/>
            <person name="McCormick F."/>
            <person name="Esposito D."/>
            <person name="Rodriguez-Viciana P."/>
            <person name="Stephen A.G."/>
            <person name="Simanshu D.K."/>
        </authorList>
    </citation>
    <scope>X-RAY CRYSTALLOGRAPHY (2.17 ANGSTROMS) OF 2-582 IN COMPLEX WITH PPP1CA AND MRAS</scope>
    <scope>FUNCTION</scope>
    <scope>INTERACTION WITH PPP1CA; PPP1CB; MRAS; KRAS; NRAS AND HRAS</scope>
    <scope>DOMAIN</scope>
    <scope>LRR REPEATS</scope>
    <scope>MUTAGENESIS OF VAL-64; PHE-66; TYR-129; TYR-131; GLU-155; ASP-175; ARG-177 AND ARG-223</scope>
    <scope>CHARACTERIZATION OF VARIANT ILE-173</scope>
</reference>
<reference evidence="16 17" key="17">
    <citation type="journal article" date="2022" name="Nature">
        <title>Structural basis for SHOC2 modulation of RAS signalling.</title>
        <authorList>
            <person name="Liau N.P.D."/>
            <person name="Johnson M.C."/>
            <person name="Izadi S."/>
            <person name="Gerosa L."/>
            <person name="Hammel M."/>
            <person name="Bruning J.M."/>
            <person name="Wendorff T.J."/>
            <person name="Phung W."/>
            <person name="Hymowitz S.G."/>
            <person name="Sudhamsu J."/>
        </authorList>
    </citation>
    <scope>STRUCTURE BY ELECTRON MICROSCOPY (2.95 ANGSTROMS) OF 2-582 IN COMPLEX WITH PPP1CC AND MRAS</scope>
    <scope>X-RAY CRYSTALLOGRAPHY (3.19 ANGSTROMS) OF 2-582</scope>
    <scope>FUNCTION</scope>
    <scope>INTERACTION WITH PPP1CA; PPP1CB; PPP1CC; MRAS; KRAS; NRAS AND HRAS</scope>
    <scope>DOMAIN</scope>
    <scope>LRR REPEATS</scope>
    <scope>MUTAGENESIS OF LYS-109; LYS-134; ASP-175; LYS-180; LYS-226; GLN-269; HIS-270; GLU-457 AND GLU-503</scope>
    <scope>CHARACTERIZATION OF VARIANT ILE-173</scope>
</reference>
<reference evidence="18 23" key="18">
    <citation type="journal article" date="2022" name="Nature">
        <title>Structure-function analysis of the SHOC2-MRAS-PP1c holophosphatase complex.</title>
        <authorList>
            <person name="Kwon J.J."/>
            <person name="Hajian B."/>
            <person name="Bian Y."/>
            <person name="Young L.C."/>
            <person name="Amor A.J."/>
            <person name="Fuller J.R."/>
            <person name="Fraley C.V."/>
            <person name="Sykes A.M."/>
            <person name="So J."/>
            <person name="Pan J."/>
            <person name="Baker L."/>
            <person name="Lee S.J."/>
            <person name="Wheeler D.B."/>
            <person name="Mayhew D.L."/>
            <person name="Persky N.S."/>
            <person name="Yang X."/>
            <person name="Root D.E."/>
            <person name="Barsotti A.M."/>
            <person name="Stamford A.W."/>
            <person name="Perry C.K."/>
            <person name="Burgin A."/>
            <person name="McCormick F."/>
            <person name="Lemke C.T."/>
            <person name="Hahn W.C."/>
            <person name="Aguirre A.J."/>
        </authorList>
    </citation>
    <scope>STRUCTURE BY ELECTRON MICROSCOPY (2.89 ANGSTROMS) OF IN COMPLEX WITH PPP1CA AND MRAS</scope>
    <scope>X-RAY CRYSTALLOGRAPHY (1.79 ANGSTROMS) OF 88-581</scope>
    <scope>FUNCTION</scope>
    <scope>INTERACTION WITH PPP1CA; PPP1CB; PPP1CC; MRAS; KRAS; NRAS AND HRAS</scope>
    <scope>DOMAIN</scope>
    <scope>LRR REPEATS</scope>
    <scope>MUTAGENESIS OF VAL-64; PHE-66; TYR-131; ARG-223 AND GLU-457</scope>
    <scope>CHARACTERIZATION OF VARIANT ILE-173</scope>
</reference>
<reference evidence="21 22" key="19">
    <citation type="journal article" date="2022" name="Nature">
        <title>Structure of the MRAS-SHOC2-PP1C phosphatase complex.</title>
        <authorList>
            <person name="Hauseman Z.J."/>
            <person name="Fodor M."/>
            <person name="Dhembi A."/>
            <person name="Viscomi J."/>
            <person name="Egli D."/>
            <person name="Bleu M."/>
            <person name="Katz S."/>
            <person name="Park E."/>
            <person name="Jang D.M."/>
            <person name="Porter K.A."/>
            <person name="Meili F."/>
            <person name="Guo H."/>
            <person name="Kerr G."/>
            <person name="Molle S."/>
            <person name="Velez-Vega C."/>
            <person name="Beyer K.S."/>
            <person name="Galli G.G."/>
            <person name="Maira S.M."/>
            <person name="Stams T."/>
            <person name="Clark K."/>
            <person name="Eck M.J."/>
            <person name="Tordella L."/>
            <person name="Thoma C.R."/>
            <person name="King D.A."/>
        </authorList>
    </citation>
    <scope>X-RAY CRYSTALLOGRAPHY (1.90 ANGSTROMS) OF 80-582 IN COMPLEX WITH PPP1CA AND MRAS</scope>
    <scope>FUNCTION</scope>
    <scope>INTERACTION WITH PPP1CA; MRAS; KRAS AND NRAS</scope>
    <scope>DOMAIN</scope>
    <scope>LRR REPEATS</scope>
    <scope>CHARACTERIZATION OF VARIANT ILE-173</scope>
</reference>